<evidence type="ECO:0000255" key="1"/>
<evidence type="ECO:0000256" key="2">
    <source>
        <dbReference type="SAM" id="MobiDB-lite"/>
    </source>
</evidence>
<evidence type="ECO:0000269" key="3">
    <source>
    </source>
</evidence>
<evidence type="ECO:0000303" key="4">
    <source>
    </source>
</evidence>
<evidence type="ECO:0000305" key="5"/>
<evidence type="ECO:0000312" key="6">
    <source>
        <dbReference type="FlyBase" id="FBgn0000427"/>
    </source>
</evidence>
<gene>
    <name evidence="6" type="primary">dec</name>
    <name evidence="4" type="synonym">dec-1</name>
    <name evidence="6" type="ORF">CG2175</name>
</gene>
<keyword id="KW-0025">Alternative splicing</keyword>
<keyword id="KW-1185">Reference proteome</keyword>
<keyword id="KW-0677">Repeat</keyword>
<keyword id="KW-0964">Secreted</keyword>
<keyword id="KW-0732">Signal</keyword>
<sequence length="1208" mass="137444">MRLFSLLPLLALLVVQAAGQSEVTSDDPATDAGSTTNSTTDTKPRIPSQDEILGQMPSINPIRTGNPQMDAFYMMFPALGSLLKWGSLFPAYSILGAIPDNLQPTAAASKVVLVLADDATAKTRVARQNPPPNPLGQLMNWPALPQDFQLPSMDLGPQVGSFLAQLPAMPTVPGLLGAAAPVPAPAPAPAAAPPPAPAPAADPPAAPVPDAPQPAILGQAALQNAFTFFNPANFDASSLLGQSVPTFAPPNLDFVAQMQRQFFPGMTPAQPAAAGTDAQASDISEVRVRPEDPYSQEAQMKIKSALEMEQERQQQAQVKDQEQVPLLWFRMPTTQNQDATEEKTLEDLRVEAKLRAFERQVIAELRMLQKIELMAKQMRSSAAAQNGDSPYRISYPLSRTPIHKITRADIEQALRDDYVRRLVNKEAQRRARNSGINTQKANALKRQAKSQDQTLSKEDIVQIMAYAYRMANEQMESEKGKQDKVYAAYRTEQNPMMMQQRQWSEEQAKIQQNQQQIQQNPMMMQQRQWSEEQAKIQQNQQQIQQNPMMMQQRQWSEEQAKIQQNQQQIQQNPMMMQQRQWSEEQAKIQQNQQQIQQNPMMVQQRQWSEEQAKIQQNQQQIQQNPMMMQQRQWSEEQAKIQHDQQMAQQMAQQGLMMTEQRQRQWSEDQAKIQQAQQMAQQTPMMMPQMQQRQWTEDPQMVQQMQQRQWAEDQTRMQMAQQNPMMQQQRQMAENPQMMQQRQWSEEQTKIEQAQQMAQQNQMMMQQMQQRQWSEDQAQIQQQQRQMMQQTPMMMKERQWAEENPQSVQQQGPMMMQQQMPSMMQREVEDEDNKAEDDLVGEAGPQMPENEGTARHKVDALGVGGNKRKKSKSKSAPPTVINYYYAAPQRPVVQSYGTSYGGGGYGSNAYGVPRPVNSYQSQGYRAAVGNDEVDEMLRQHQTMARTINPKQPGEVGGSESQKSNSNPPTTLTPAPQEQPQEHRVHKSPSSAPSETEIENAPSSDPQVGSIFTYGEGLLHPFMGLLPVERPDDPWNQKPYDPHHPLYTGGGSYDAYLRDGRHRRDTHIMGQGTQHGILTPGMLERLLRIKMDFQRRFPHLYKGMLNHHTNLTRVEVQPPVLGKISKPKTKTKPKNEDEPVFELGAAERSLFEDETNDSLEKDPEPEPDEEDDRDVEEPSESSEPRGFSSKKSRDENDIDYFNFDDDDVDD</sequence>
<comment type="function">
    <text evidence="3">Required for proper assembly of the eggshell.</text>
</comment>
<comment type="subcellular location">
    <subcellularLocation>
        <location evidence="3">Secreted</location>
    </subcellularLocation>
</comment>
<comment type="alternative products">
    <event type="alternative splicing"/>
    <isoform>
        <id>P18169-1</id>
        <name>FC125</name>
        <sequence type="displayed"/>
    </isoform>
    <isoform>
        <id>P18170-1</id>
        <name>FC106</name>
        <sequence type="external"/>
    </isoform>
    <isoform>
        <id>P18171-1</id>
        <name>FC177</name>
        <sequence type="external"/>
    </isoform>
</comment>
<comment type="developmental stage">
    <text evidence="3">Expression peaks at embryonic stage 10A, is slightly reduced by stage 10B, and undetected in stage 11.</text>
</comment>
<accession>P18169</accession>
<accession>Q8IRP1</accession>
<feature type="signal peptide" evidence="1">
    <location>
        <begin position="1"/>
        <end position="19"/>
    </location>
</feature>
<feature type="chain" id="PRO_0000021097" description="Defective chorion protein, FC125 isoform">
    <location>
        <begin position="20"/>
        <end position="1208"/>
    </location>
</feature>
<feature type="repeat" description="1">
    <location>
        <begin position="493"/>
        <end position="518"/>
    </location>
</feature>
<feature type="repeat" description="2">
    <location>
        <begin position="519"/>
        <end position="544"/>
    </location>
</feature>
<feature type="repeat" description="3">
    <location>
        <begin position="545"/>
        <end position="570"/>
    </location>
</feature>
<feature type="repeat" description="4">
    <location>
        <begin position="571"/>
        <end position="596"/>
    </location>
</feature>
<feature type="repeat" description="5">
    <location>
        <begin position="597"/>
        <end position="622"/>
    </location>
</feature>
<feature type="repeat" description="6; approximate">
    <location>
        <begin position="623"/>
        <end position="652"/>
    </location>
</feature>
<feature type="repeat" description="7; approximate">
    <location>
        <begin position="653"/>
        <end position="680"/>
    </location>
</feature>
<feature type="repeat" description="8; approximate">
    <location>
        <begin position="681"/>
        <end position="696"/>
    </location>
</feature>
<feature type="repeat" description="9; approximate">
    <location>
        <begin position="697"/>
        <end position="720"/>
    </location>
</feature>
<feature type="repeat" description="10; approximate">
    <location>
        <begin position="721"/>
        <end position="733"/>
    </location>
</feature>
<feature type="repeat" description="11; approximate">
    <location>
        <begin position="734"/>
        <end position="758"/>
    </location>
</feature>
<feature type="repeat" description="12; approximate">
    <location>
        <begin position="759"/>
        <end position="788"/>
    </location>
</feature>
<feature type="region of interest" description="Disordered" evidence="2">
    <location>
        <begin position="23"/>
        <end position="60"/>
    </location>
</feature>
<feature type="region of interest" description="Disordered" evidence="2">
    <location>
        <begin position="184"/>
        <end position="212"/>
    </location>
</feature>
<feature type="region of interest" description="Disordered" evidence="2">
    <location>
        <begin position="268"/>
        <end position="294"/>
    </location>
</feature>
<feature type="region of interest" description="12 X 26 AA approximate tandem repeats, Glu, Met-rich">
    <location>
        <begin position="493"/>
        <end position="788"/>
    </location>
</feature>
<feature type="region of interest" description="Disordered" evidence="2">
    <location>
        <begin position="828"/>
        <end position="875"/>
    </location>
</feature>
<feature type="region of interest" description="Disordered" evidence="2">
    <location>
        <begin position="944"/>
        <end position="1010"/>
    </location>
</feature>
<feature type="region of interest" description="Disordered" evidence="2">
    <location>
        <begin position="1114"/>
        <end position="1208"/>
    </location>
</feature>
<feature type="compositionally biased region" description="Polar residues" evidence="2">
    <location>
        <begin position="32"/>
        <end position="41"/>
    </location>
</feature>
<feature type="compositionally biased region" description="Low complexity" evidence="2">
    <location>
        <begin position="268"/>
        <end position="280"/>
    </location>
</feature>
<feature type="compositionally biased region" description="Acidic residues" evidence="2">
    <location>
        <begin position="828"/>
        <end position="839"/>
    </location>
</feature>
<feature type="compositionally biased region" description="Polar residues" evidence="2">
    <location>
        <begin position="957"/>
        <end position="977"/>
    </location>
</feature>
<feature type="compositionally biased region" description="Acidic residues" evidence="2">
    <location>
        <begin position="1163"/>
        <end position="1178"/>
    </location>
</feature>
<feature type="compositionally biased region" description="Acidic residues" evidence="2">
    <location>
        <begin position="1194"/>
        <end position="1208"/>
    </location>
</feature>
<feature type="sequence conflict" description="In Ref. 1; AAA28446." evidence="5" ref="1">
    <original>A</original>
    <variation>V</variation>
    <location>
        <position position="17"/>
    </location>
</feature>
<feature type="sequence conflict" description="In Ref. 1; AAA28446." evidence="5" ref="1">
    <original>Q</original>
    <variation>E</variation>
    <location>
        <position position="219"/>
    </location>
</feature>
<feature type="sequence conflict" description="In Ref. 1; AAA28446." evidence="5" ref="1">
    <original>D</original>
    <variation>H</variation>
    <location>
        <position position="347"/>
    </location>
</feature>
<feature type="sequence conflict" description="In Ref. 1; AAA28446." evidence="5" ref="1">
    <original>A</original>
    <variation>T</variation>
    <location>
        <position position="382"/>
    </location>
</feature>
<feature type="sequence conflict" description="In Ref. 1; AAA28446." evidence="5" ref="1">
    <original>PENEGTARHKVDALGVGGNKRKKSKSKSAPP</original>
    <variation>AGERRHRQAQSRCPGSWRQQAQEVQVQVGAA</variation>
    <location>
        <begin position="847"/>
        <end position="877"/>
    </location>
</feature>
<feature type="sequence conflict" description="In Ref. 1." evidence="5" ref="1">
    <original>QRPVVQSYGTSYGG</original>
    <variation>SVRWFRVTEQATAE</variation>
    <location>
        <begin position="888"/>
        <end position="901"/>
    </location>
</feature>
<organism>
    <name type="scientific">Drosophila melanogaster</name>
    <name type="common">Fruit fly</name>
    <dbReference type="NCBI Taxonomy" id="7227"/>
    <lineage>
        <taxon>Eukaryota</taxon>
        <taxon>Metazoa</taxon>
        <taxon>Ecdysozoa</taxon>
        <taxon>Arthropoda</taxon>
        <taxon>Hexapoda</taxon>
        <taxon>Insecta</taxon>
        <taxon>Pterygota</taxon>
        <taxon>Neoptera</taxon>
        <taxon>Endopterygota</taxon>
        <taxon>Diptera</taxon>
        <taxon>Brachycera</taxon>
        <taxon>Muscomorpha</taxon>
        <taxon>Ephydroidea</taxon>
        <taxon>Drosophilidae</taxon>
        <taxon>Drosophila</taxon>
        <taxon>Sophophora</taxon>
    </lineage>
</organism>
<reference key="1">
    <citation type="journal article" date="1990" name="Dev. Biol.">
        <title>Multiple proteins are produced from the dec-1 eggshell gene in Drosophila by alternative RNA splicing and proteolytic cleavage events.</title>
        <authorList>
            <person name="Waring G.L."/>
            <person name="Hawley R.J."/>
            <person name="Schoenfeld T."/>
        </authorList>
    </citation>
    <scope>NUCLEOTIDE SEQUENCE [MRNA]</scope>
    <scope>ALTERNATIVE SPLICING</scope>
</reference>
<reference key="2">
    <citation type="journal article" date="2000" name="Science">
        <title>The genome sequence of Drosophila melanogaster.</title>
        <authorList>
            <person name="Adams M.D."/>
            <person name="Celniker S.E."/>
            <person name="Holt R.A."/>
            <person name="Evans C.A."/>
            <person name="Gocayne J.D."/>
            <person name="Amanatides P.G."/>
            <person name="Scherer S.E."/>
            <person name="Li P.W."/>
            <person name="Hoskins R.A."/>
            <person name="Galle R.F."/>
            <person name="George R.A."/>
            <person name="Lewis S.E."/>
            <person name="Richards S."/>
            <person name="Ashburner M."/>
            <person name="Henderson S.N."/>
            <person name="Sutton G.G."/>
            <person name="Wortman J.R."/>
            <person name="Yandell M.D."/>
            <person name="Zhang Q."/>
            <person name="Chen L.X."/>
            <person name="Brandon R.C."/>
            <person name="Rogers Y.-H.C."/>
            <person name="Blazej R.G."/>
            <person name="Champe M."/>
            <person name="Pfeiffer B.D."/>
            <person name="Wan K.H."/>
            <person name="Doyle C."/>
            <person name="Baxter E.G."/>
            <person name="Helt G."/>
            <person name="Nelson C.R."/>
            <person name="Miklos G.L.G."/>
            <person name="Abril J.F."/>
            <person name="Agbayani A."/>
            <person name="An H.-J."/>
            <person name="Andrews-Pfannkoch C."/>
            <person name="Baldwin D."/>
            <person name="Ballew R.M."/>
            <person name="Basu A."/>
            <person name="Baxendale J."/>
            <person name="Bayraktaroglu L."/>
            <person name="Beasley E.M."/>
            <person name="Beeson K.Y."/>
            <person name="Benos P.V."/>
            <person name="Berman B.P."/>
            <person name="Bhandari D."/>
            <person name="Bolshakov S."/>
            <person name="Borkova D."/>
            <person name="Botchan M.R."/>
            <person name="Bouck J."/>
            <person name="Brokstein P."/>
            <person name="Brottier P."/>
            <person name="Burtis K.C."/>
            <person name="Busam D.A."/>
            <person name="Butler H."/>
            <person name="Cadieu E."/>
            <person name="Center A."/>
            <person name="Chandra I."/>
            <person name="Cherry J.M."/>
            <person name="Cawley S."/>
            <person name="Dahlke C."/>
            <person name="Davenport L.B."/>
            <person name="Davies P."/>
            <person name="de Pablos B."/>
            <person name="Delcher A."/>
            <person name="Deng Z."/>
            <person name="Mays A.D."/>
            <person name="Dew I."/>
            <person name="Dietz S.M."/>
            <person name="Dodson K."/>
            <person name="Doup L.E."/>
            <person name="Downes M."/>
            <person name="Dugan-Rocha S."/>
            <person name="Dunkov B.C."/>
            <person name="Dunn P."/>
            <person name="Durbin K.J."/>
            <person name="Evangelista C.C."/>
            <person name="Ferraz C."/>
            <person name="Ferriera S."/>
            <person name="Fleischmann W."/>
            <person name="Fosler C."/>
            <person name="Gabrielian A.E."/>
            <person name="Garg N.S."/>
            <person name="Gelbart W.M."/>
            <person name="Glasser K."/>
            <person name="Glodek A."/>
            <person name="Gong F."/>
            <person name="Gorrell J.H."/>
            <person name="Gu Z."/>
            <person name="Guan P."/>
            <person name="Harris M."/>
            <person name="Harris N.L."/>
            <person name="Harvey D.A."/>
            <person name="Heiman T.J."/>
            <person name="Hernandez J.R."/>
            <person name="Houck J."/>
            <person name="Hostin D."/>
            <person name="Houston K.A."/>
            <person name="Howland T.J."/>
            <person name="Wei M.-H."/>
            <person name="Ibegwam C."/>
            <person name="Jalali M."/>
            <person name="Kalush F."/>
            <person name="Karpen G.H."/>
            <person name="Ke Z."/>
            <person name="Kennison J.A."/>
            <person name="Ketchum K.A."/>
            <person name="Kimmel B.E."/>
            <person name="Kodira C.D."/>
            <person name="Kraft C.L."/>
            <person name="Kravitz S."/>
            <person name="Kulp D."/>
            <person name="Lai Z."/>
            <person name="Lasko P."/>
            <person name="Lei Y."/>
            <person name="Levitsky A.A."/>
            <person name="Li J.H."/>
            <person name="Li Z."/>
            <person name="Liang Y."/>
            <person name="Lin X."/>
            <person name="Liu X."/>
            <person name="Mattei B."/>
            <person name="McIntosh T.C."/>
            <person name="McLeod M.P."/>
            <person name="McPherson D."/>
            <person name="Merkulov G."/>
            <person name="Milshina N.V."/>
            <person name="Mobarry C."/>
            <person name="Morris J."/>
            <person name="Moshrefi A."/>
            <person name="Mount S.M."/>
            <person name="Moy M."/>
            <person name="Murphy B."/>
            <person name="Murphy L."/>
            <person name="Muzny D.M."/>
            <person name="Nelson D.L."/>
            <person name="Nelson D.R."/>
            <person name="Nelson K.A."/>
            <person name="Nixon K."/>
            <person name="Nusskern D.R."/>
            <person name="Pacleb J.M."/>
            <person name="Palazzolo M."/>
            <person name="Pittman G.S."/>
            <person name="Pan S."/>
            <person name="Pollard J."/>
            <person name="Puri V."/>
            <person name="Reese M.G."/>
            <person name="Reinert K."/>
            <person name="Remington K."/>
            <person name="Saunders R.D.C."/>
            <person name="Scheeler F."/>
            <person name="Shen H."/>
            <person name="Shue B.C."/>
            <person name="Siden-Kiamos I."/>
            <person name="Simpson M."/>
            <person name="Skupski M.P."/>
            <person name="Smith T.J."/>
            <person name="Spier E."/>
            <person name="Spradling A.C."/>
            <person name="Stapleton M."/>
            <person name="Strong R."/>
            <person name="Sun E."/>
            <person name="Svirskas R."/>
            <person name="Tector C."/>
            <person name="Turner R."/>
            <person name="Venter E."/>
            <person name="Wang A.H."/>
            <person name="Wang X."/>
            <person name="Wang Z.-Y."/>
            <person name="Wassarman D.A."/>
            <person name="Weinstock G.M."/>
            <person name="Weissenbach J."/>
            <person name="Williams S.M."/>
            <person name="Woodage T."/>
            <person name="Worley K.C."/>
            <person name="Wu D."/>
            <person name="Yang S."/>
            <person name="Yao Q.A."/>
            <person name="Ye J."/>
            <person name="Yeh R.-F."/>
            <person name="Zaveri J.S."/>
            <person name="Zhan M."/>
            <person name="Zhang G."/>
            <person name="Zhao Q."/>
            <person name="Zheng L."/>
            <person name="Zheng X.H."/>
            <person name="Zhong F.N."/>
            <person name="Zhong W."/>
            <person name="Zhou X."/>
            <person name="Zhu S.C."/>
            <person name="Zhu X."/>
            <person name="Smith H.O."/>
            <person name="Gibbs R.A."/>
            <person name="Myers E.W."/>
            <person name="Rubin G.M."/>
            <person name="Venter J.C."/>
        </authorList>
    </citation>
    <scope>NUCLEOTIDE SEQUENCE [LARGE SCALE GENOMIC DNA]</scope>
    <source>
        <strain>Berkeley</strain>
    </source>
</reference>
<reference key="3">
    <citation type="journal article" date="2002" name="Genome Biol.">
        <title>Annotation of the Drosophila melanogaster euchromatic genome: a systematic review.</title>
        <authorList>
            <person name="Misra S."/>
            <person name="Crosby M.A."/>
            <person name="Mungall C.J."/>
            <person name="Matthews B.B."/>
            <person name="Campbell K.S."/>
            <person name="Hradecky P."/>
            <person name="Huang Y."/>
            <person name="Kaminker J.S."/>
            <person name="Millburn G.H."/>
            <person name="Prochnik S.E."/>
            <person name="Smith C.D."/>
            <person name="Tupy J.L."/>
            <person name="Whitfield E.J."/>
            <person name="Bayraktaroglu L."/>
            <person name="Berman B.P."/>
            <person name="Bettencourt B.R."/>
            <person name="Celniker S.E."/>
            <person name="de Grey A.D.N.J."/>
            <person name="Drysdale R.A."/>
            <person name="Harris N.L."/>
            <person name="Richter J."/>
            <person name="Russo S."/>
            <person name="Schroeder A.J."/>
            <person name="Shu S.Q."/>
            <person name="Stapleton M."/>
            <person name="Yamada C."/>
            <person name="Ashburner M."/>
            <person name="Gelbart W.M."/>
            <person name="Rubin G.M."/>
            <person name="Lewis S.E."/>
        </authorList>
    </citation>
    <scope>GENOME REANNOTATION</scope>
    <scope>ALTERNATIVE SPLICING</scope>
    <source>
        <strain>Berkeley</strain>
    </source>
</reference>
<reference key="4">
    <citation type="journal article" date="1988" name="Genes Dev.">
        <title>Cloning and analysis of the dec-1 female-sterile locus, a gene required for proper assembly of the Drosophila eggshell.</title>
        <authorList>
            <person name="Hawley R.J."/>
            <person name="Waring G.L."/>
        </authorList>
    </citation>
    <scope>FUNCTION</scope>
    <scope>SUBCELLULAR LOCATION</scope>
    <scope>DEVELOPMENTAL STAGE</scope>
</reference>
<name>DEC11_DROME</name>
<protein>
    <recommendedName>
        <fullName evidence="5">Defective chorion protein, FC125 isoform</fullName>
    </recommendedName>
</protein>
<proteinExistence type="evidence at transcript level"/>
<dbReference type="EMBL" id="M35887">
    <property type="protein sequence ID" value="AAA28446.1"/>
    <property type="molecule type" value="mRNA"/>
</dbReference>
<dbReference type="EMBL" id="AE014298">
    <property type="protein sequence ID" value="AAN09215.1"/>
    <property type="molecule type" value="Genomic_DNA"/>
</dbReference>
<dbReference type="PIR" id="A44766">
    <property type="entry name" value="A44766"/>
</dbReference>
<dbReference type="RefSeq" id="NP_727202.1">
    <molecule id="P18169-1"/>
    <property type="nucleotide sequence ID" value="NM_167132.2"/>
</dbReference>
<dbReference type="BioGRID" id="58165">
    <property type="interactions" value="5"/>
</dbReference>
<dbReference type="IntAct" id="P18169">
    <property type="interactions" value="5"/>
</dbReference>
<dbReference type="DNASU" id="31691"/>
<dbReference type="EnsemblMetazoa" id="FBtr0071146">
    <molecule id="P18169-1"/>
    <property type="protein sequence ID" value="FBpp0071098"/>
    <property type="gene ID" value="FBgn0000427"/>
</dbReference>
<dbReference type="GeneID" id="31691"/>
<dbReference type="AGR" id="FB:FBgn0000427"/>
<dbReference type="CTD" id="31691"/>
<dbReference type="FlyBase" id="FBgn0000427">
    <property type="gene designation" value="dec"/>
</dbReference>
<dbReference type="VEuPathDB" id="VectorBase:FBgn0000427"/>
<dbReference type="OrthoDB" id="8070541at2759"/>
<dbReference type="SignaLink" id="P18169"/>
<dbReference type="BioGRID-ORCS" id="31691">
    <property type="hits" value="0 hits in 1 CRISPR screen"/>
</dbReference>
<dbReference type="GenomeRNAi" id="31691"/>
<dbReference type="Proteomes" id="UP000000803">
    <property type="component" value="Chromosome X"/>
</dbReference>
<dbReference type="Bgee" id="FBgn0000427">
    <property type="expression patterns" value="Expressed in polar follicle cell (Drosophila) in ovary and 39 other cell types or tissues"/>
</dbReference>
<dbReference type="ExpressionAtlas" id="P18169">
    <property type="expression patterns" value="baseline and differential"/>
</dbReference>
<dbReference type="GO" id="GO:0042600">
    <property type="term" value="C:egg chorion"/>
    <property type="evidence" value="ECO:0000314"/>
    <property type="project" value="UniProtKB"/>
</dbReference>
<dbReference type="GO" id="GO:0005576">
    <property type="term" value="C:extracellular region"/>
    <property type="evidence" value="ECO:0007669"/>
    <property type="project" value="UniProtKB-SubCell"/>
</dbReference>
<dbReference type="GO" id="GO:0005634">
    <property type="term" value="C:nucleus"/>
    <property type="evidence" value="ECO:0000318"/>
    <property type="project" value="GO_Central"/>
</dbReference>
<dbReference type="GO" id="GO:0000987">
    <property type="term" value="F:cis-regulatory region sequence-specific DNA binding"/>
    <property type="evidence" value="ECO:0000318"/>
    <property type="project" value="GO_Central"/>
</dbReference>
<dbReference type="GO" id="GO:0000981">
    <property type="term" value="F:DNA-binding transcription factor activity, RNA polymerase II-specific"/>
    <property type="evidence" value="ECO:0000318"/>
    <property type="project" value="GO_Central"/>
</dbReference>
<dbReference type="GO" id="GO:0005213">
    <property type="term" value="F:structural constituent of egg chorion"/>
    <property type="evidence" value="ECO:0000315"/>
    <property type="project" value="UniProtKB"/>
</dbReference>
<dbReference type="GO" id="GO:0007304">
    <property type="term" value="P:chorion-containing eggshell formation"/>
    <property type="evidence" value="ECO:0000315"/>
    <property type="project" value="FlyBase"/>
</dbReference>
<dbReference type="GO" id="GO:0007306">
    <property type="term" value="P:egg chorion assembly"/>
    <property type="evidence" value="ECO:0000315"/>
    <property type="project" value="UniProtKB"/>
</dbReference>
<dbReference type="GO" id="GO:0042594">
    <property type="term" value="P:response to starvation"/>
    <property type="evidence" value="ECO:0000318"/>
    <property type="project" value="GO_Central"/>
</dbReference>
<dbReference type="InterPro" id="IPR006720">
    <property type="entry name" value="DEC-1_C"/>
</dbReference>
<dbReference type="InterPro" id="IPR006719">
    <property type="entry name" value="DEC-1_N"/>
</dbReference>
<dbReference type="InterPro" id="IPR006718">
    <property type="entry name" value="DEC-1_REPEAT"/>
</dbReference>
<dbReference type="Pfam" id="PF04624">
    <property type="entry name" value="Dec-1"/>
    <property type="match status" value="8"/>
</dbReference>
<dbReference type="Pfam" id="PF04626">
    <property type="entry name" value="DEC-1_C"/>
    <property type="match status" value="1"/>
</dbReference>
<dbReference type="Pfam" id="PF04625">
    <property type="entry name" value="DEC-1_N"/>
    <property type="match status" value="1"/>
</dbReference>